<feature type="chain" id="PRO_0000135765" description="Histidinol dehydrogenase">
    <location>
        <begin position="1"/>
        <end position="436"/>
    </location>
</feature>
<feature type="active site" description="Proton acceptor" evidence="1">
    <location>
        <position position="334"/>
    </location>
</feature>
<feature type="active site" description="Proton acceptor" evidence="1">
    <location>
        <position position="335"/>
    </location>
</feature>
<feature type="binding site" evidence="1">
    <location>
        <position position="136"/>
    </location>
    <ligand>
        <name>NAD(+)</name>
        <dbReference type="ChEBI" id="CHEBI:57540"/>
    </ligand>
</feature>
<feature type="binding site" evidence="1">
    <location>
        <position position="198"/>
    </location>
    <ligand>
        <name>NAD(+)</name>
        <dbReference type="ChEBI" id="CHEBI:57540"/>
    </ligand>
</feature>
<feature type="binding site" evidence="1">
    <location>
        <position position="221"/>
    </location>
    <ligand>
        <name>NAD(+)</name>
        <dbReference type="ChEBI" id="CHEBI:57540"/>
    </ligand>
</feature>
<feature type="binding site" evidence="1">
    <location>
        <position position="244"/>
    </location>
    <ligand>
        <name>substrate</name>
    </ligand>
</feature>
<feature type="binding site" evidence="1">
    <location>
        <position position="266"/>
    </location>
    <ligand>
        <name>substrate</name>
    </ligand>
</feature>
<feature type="binding site" evidence="1">
    <location>
        <position position="266"/>
    </location>
    <ligand>
        <name>Zn(2+)</name>
        <dbReference type="ChEBI" id="CHEBI:29105"/>
    </ligand>
</feature>
<feature type="binding site" evidence="1">
    <location>
        <position position="269"/>
    </location>
    <ligand>
        <name>substrate</name>
    </ligand>
</feature>
<feature type="binding site" evidence="1">
    <location>
        <position position="269"/>
    </location>
    <ligand>
        <name>Zn(2+)</name>
        <dbReference type="ChEBI" id="CHEBI:29105"/>
    </ligand>
</feature>
<feature type="binding site" evidence="1">
    <location>
        <position position="335"/>
    </location>
    <ligand>
        <name>substrate</name>
    </ligand>
</feature>
<feature type="binding site" evidence="1">
    <location>
        <position position="368"/>
    </location>
    <ligand>
        <name>substrate</name>
    </ligand>
</feature>
<feature type="binding site" evidence="1">
    <location>
        <position position="368"/>
    </location>
    <ligand>
        <name>Zn(2+)</name>
        <dbReference type="ChEBI" id="CHEBI:29105"/>
    </ligand>
</feature>
<feature type="binding site" evidence="1">
    <location>
        <position position="422"/>
    </location>
    <ligand>
        <name>substrate</name>
    </ligand>
</feature>
<feature type="binding site" evidence="1">
    <location>
        <position position="427"/>
    </location>
    <ligand>
        <name>substrate</name>
    </ligand>
</feature>
<feature type="binding site" evidence="1">
    <location>
        <position position="427"/>
    </location>
    <ligand>
        <name>Zn(2+)</name>
        <dbReference type="ChEBI" id="CHEBI:29105"/>
    </ligand>
</feature>
<proteinExistence type="inferred from homology"/>
<organism>
    <name type="scientific">Dehalococcoides mccartyi (strain CBDB1)</name>
    <dbReference type="NCBI Taxonomy" id="255470"/>
    <lineage>
        <taxon>Bacteria</taxon>
        <taxon>Bacillati</taxon>
        <taxon>Chloroflexota</taxon>
        <taxon>Dehalococcoidia</taxon>
        <taxon>Dehalococcoidales</taxon>
        <taxon>Dehalococcoidaceae</taxon>
        <taxon>Dehalococcoides</taxon>
    </lineage>
</organism>
<reference key="1">
    <citation type="journal article" date="2005" name="Nat. Biotechnol.">
        <title>Genome sequence of the chlorinated compound-respiring bacterium Dehalococcoides species strain CBDB1.</title>
        <authorList>
            <person name="Kube M."/>
            <person name="Beck A."/>
            <person name="Zinder S.H."/>
            <person name="Kuhl H."/>
            <person name="Reinhardt R."/>
            <person name="Adrian L."/>
        </authorList>
    </citation>
    <scope>NUCLEOTIDE SEQUENCE [LARGE SCALE GENOMIC DNA]</scope>
    <source>
        <strain>CBDB1</strain>
    </source>
</reference>
<evidence type="ECO:0000255" key="1">
    <source>
        <dbReference type="HAMAP-Rule" id="MF_01024"/>
    </source>
</evidence>
<comment type="function">
    <text evidence="1">Catalyzes the sequential NAD-dependent oxidations of L-histidinol to L-histidinaldehyde and then to L-histidine.</text>
</comment>
<comment type="catalytic activity">
    <reaction evidence="1">
        <text>L-histidinol + 2 NAD(+) + H2O = L-histidine + 2 NADH + 3 H(+)</text>
        <dbReference type="Rhea" id="RHEA:20641"/>
        <dbReference type="ChEBI" id="CHEBI:15377"/>
        <dbReference type="ChEBI" id="CHEBI:15378"/>
        <dbReference type="ChEBI" id="CHEBI:57540"/>
        <dbReference type="ChEBI" id="CHEBI:57595"/>
        <dbReference type="ChEBI" id="CHEBI:57699"/>
        <dbReference type="ChEBI" id="CHEBI:57945"/>
        <dbReference type="EC" id="1.1.1.23"/>
    </reaction>
</comment>
<comment type="cofactor">
    <cofactor evidence="1">
        <name>Zn(2+)</name>
        <dbReference type="ChEBI" id="CHEBI:29105"/>
    </cofactor>
    <text evidence="1">Binds 1 zinc ion per subunit.</text>
</comment>
<comment type="pathway">
    <text evidence="1">Amino-acid biosynthesis; L-histidine biosynthesis; L-histidine from 5-phospho-alpha-D-ribose 1-diphosphate: step 9/9.</text>
</comment>
<comment type="similarity">
    <text evidence="1">Belongs to the histidinol dehydrogenase family.</text>
</comment>
<protein>
    <recommendedName>
        <fullName evidence="1">Histidinol dehydrogenase</fullName>
        <shortName evidence="1">HDH</shortName>
        <ecNumber evidence="1">1.1.1.23</ecNumber>
    </recommendedName>
</protein>
<accession>Q3ZXL7</accession>
<dbReference type="EC" id="1.1.1.23" evidence="1"/>
<dbReference type="EMBL" id="AJ965256">
    <property type="protein sequence ID" value="CAI82971.1"/>
    <property type="molecule type" value="Genomic_DNA"/>
</dbReference>
<dbReference type="RefSeq" id="WP_011309322.1">
    <property type="nucleotide sequence ID" value="NC_007356.1"/>
</dbReference>
<dbReference type="SMR" id="Q3ZXL7"/>
<dbReference type="KEGG" id="deh:cbdbA826"/>
<dbReference type="HOGENOM" id="CLU_006732_3_0_0"/>
<dbReference type="UniPathway" id="UPA00031">
    <property type="reaction ID" value="UER00014"/>
</dbReference>
<dbReference type="Proteomes" id="UP000000433">
    <property type="component" value="Chromosome"/>
</dbReference>
<dbReference type="GO" id="GO:0005829">
    <property type="term" value="C:cytosol"/>
    <property type="evidence" value="ECO:0007669"/>
    <property type="project" value="TreeGrafter"/>
</dbReference>
<dbReference type="GO" id="GO:0004399">
    <property type="term" value="F:histidinol dehydrogenase activity"/>
    <property type="evidence" value="ECO:0007669"/>
    <property type="project" value="UniProtKB-UniRule"/>
</dbReference>
<dbReference type="GO" id="GO:0051287">
    <property type="term" value="F:NAD binding"/>
    <property type="evidence" value="ECO:0007669"/>
    <property type="project" value="InterPro"/>
</dbReference>
<dbReference type="GO" id="GO:0008270">
    <property type="term" value="F:zinc ion binding"/>
    <property type="evidence" value="ECO:0007669"/>
    <property type="project" value="UniProtKB-UniRule"/>
</dbReference>
<dbReference type="GO" id="GO:0000105">
    <property type="term" value="P:L-histidine biosynthetic process"/>
    <property type="evidence" value="ECO:0007669"/>
    <property type="project" value="UniProtKB-UniRule"/>
</dbReference>
<dbReference type="CDD" id="cd06572">
    <property type="entry name" value="Histidinol_dh"/>
    <property type="match status" value="1"/>
</dbReference>
<dbReference type="FunFam" id="3.40.50.1980:FF:000001">
    <property type="entry name" value="Histidinol dehydrogenase"/>
    <property type="match status" value="1"/>
</dbReference>
<dbReference type="FunFam" id="3.40.50.1980:FF:000026">
    <property type="entry name" value="Histidinol dehydrogenase"/>
    <property type="match status" value="1"/>
</dbReference>
<dbReference type="Gene3D" id="1.20.5.1300">
    <property type="match status" value="1"/>
</dbReference>
<dbReference type="Gene3D" id="3.40.50.1980">
    <property type="entry name" value="Nitrogenase molybdenum iron protein domain"/>
    <property type="match status" value="2"/>
</dbReference>
<dbReference type="HAMAP" id="MF_01024">
    <property type="entry name" value="HisD"/>
    <property type="match status" value="1"/>
</dbReference>
<dbReference type="InterPro" id="IPR016161">
    <property type="entry name" value="Ald_DH/histidinol_DH"/>
</dbReference>
<dbReference type="InterPro" id="IPR001692">
    <property type="entry name" value="Histidinol_DH_CS"/>
</dbReference>
<dbReference type="InterPro" id="IPR022695">
    <property type="entry name" value="Histidinol_DH_monofunct"/>
</dbReference>
<dbReference type="InterPro" id="IPR012131">
    <property type="entry name" value="Hstdl_DH"/>
</dbReference>
<dbReference type="NCBIfam" id="TIGR00069">
    <property type="entry name" value="hisD"/>
    <property type="match status" value="1"/>
</dbReference>
<dbReference type="PANTHER" id="PTHR21256:SF2">
    <property type="entry name" value="HISTIDINE BIOSYNTHESIS TRIFUNCTIONAL PROTEIN"/>
    <property type="match status" value="1"/>
</dbReference>
<dbReference type="PANTHER" id="PTHR21256">
    <property type="entry name" value="HISTIDINOL DEHYDROGENASE HDH"/>
    <property type="match status" value="1"/>
</dbReference>
<dbReference type="Pfam" id="PF00815">
    <property type="entry name" value="Histidinol_dh"/>
    <property type="match status" value="1"/>
</dbReference>
<dbReference type="PIRSF" id="PIRSF000099">
    <property type="entry name" value="Histidinol_dh"/>
    <property type="match status" value="1"/>
</dbReference>
<dbReference type="PRINTS" id="PR00083">
    <property type="entry name" value="HOLDHDRGNASE"/>
</dbReference>
<dbReference type="SUPFAM" id="SSF53720">
    <property type="entry name" value="ALDH-like"/>
    <property type="match status" value="1"/>
</dbReference>
<dbReference type="PROSITE" id="PS00611">
    <property type="entry name" value="HISOL_DEHYDROGENASE"/>
    <property type="match status" value="1"/>
</dbReference>
<sequence length="436" mass="46942">MKIIRGFAQAEKRLSRRDKAGFFLDETERTELARRLGVDPEKAVNGIIADVRKQGDEAVLGYTLKFDRANLSKLEVGQPEIQQAASEIPAELFEALQLAASQIRAYHRFQKEAVWKTAEIMQGKQLIRPLERVGLYVPGGKAFYPSTVLMTAIPAREAGVKEIILVTPPGANGKIPAPTLAAAQIAGVDRIFACGGAQAVAALAFGTKSIPKVDKICGPGNIFVTLAKKAVFGVVDIDGLQGPSEVLIVADQYANAEYCASDILAQAEHDALASSILITTSEDLANRVNDIVESKADTCSRRDIIKQSLRDNGLIAVVDNINEAIKLANMYAAEHLCLLVKDSEKYLTQINHAGCIFYGEKASVVMGDYVAGPSHALPTSGTARFSSPLNILDFVKYIDIVKVDKQDIAKLGQAAATIAKAEGLECHAEAVLKRLE</sequence>
<keyword id="KW-0028">Amino-acid biosynthesis</keyword>
<keyword id="KW-0368">Histidine biosynthesis</keyword>
<keyword id="KW-0479">Metal-binding</keyword>
<keyword id="KW-0520">NAD</keyword>
<keyword id="KW-0560">Oxidoreductase</keyword>
<keyword id="KW-0862">Zinc</keyword>
<gene>
    <name evidence="1" type="primary">hisD</name>
    <name type="ordered locus">cbdbA826</name>
</gene>
<name>HISX_DEHMC</name>